<keyword id="KW-0560">Oxidoreductase</keyword>
<keyword id="KW-1185">Reference proteome</keyword>
<sequence>MSNTVLVSGASGFIALHILSQLLKQDYKVIGTVRSHEKEAKLLRQFQHNPNLTLEIVPDISHPNAFDKVLQKRGREIRYVLHTASPFHYDTTEYEKDLLIPALEGTKNILNSIKKYAADTVERVVVTSSCTAIITLAKMDDPSVVFTEESWNEATWESCQIDGINAYFASKKFAEKAAWEFTKENEDHIKFKLTTVNPSLLFGPQLFDEDVHGHLNTSCEMINGLIHTPVNASVPDFHSIFIDVRDVALAHLYAFQKENTAGKRLVVTNGKFGNQDILDILNEDFPQLRGLIPLGKPGTGDQVIDRGSTTDNSATRKILGFEFRSLHESVHDTAAQILKKQNRL</sequence>
<gene>
    <name type="ordered locus">YDR541C</name>
</gene>
<feature type="chain" id="PRO_0000253887" description="Putative uncharacterized oxidoreductase YDR541C">
    <location>
        <begin position="1"/>
        <end position="344"/>
    </location>
</feature>
<feature type="binding site" evidence="1">
    <location>
        <position position="38"/>
    </location>
    <ligand>
        <name>NADP(+)</name>
        <dbReference type="ChEBI" id="CHEBI:58349"/>
    </ligand>
</feature>
<feature type="binding site" evidence="1">
    <location>
        <position position="167"/>
    </location>
    <ligand>
        <name>NADP(+)</name>
        <dbReference type="ChEBI" id="CHEBI:58349"/>
    </ligand>
</feature>
<feature type="sequence conflict" description="In Ref. 1; AAB64983 and 3; AAT92694." evidence="2" ref="1 3">
    <original>Q</original>
    <variation>E</variation>
    <location>
        <position position="341"/>
    </location>
</feature>
<evidence type="ECO:0000250" key="1">
    <source>
        <dbReference type="UniProtKB" id="A0A059TC02"/>
    </source>
</evidence>
<evidence type="ECO:0000305" key="2"/>
<organism>
    <name type="scientific">Saccharomyces cerevisiae (strain ATCC 204508 / S288c)</name>
    <name type="common">Baker's yeast</name>
    <dbReference type="NCBI Taxonomy" id="559292"/>
    <lineage>
        <taxon>Eukaryota</taxon>
        <taxon>Fungi</taxon>
        <taxon>Dikarya</taxon>
        <taxon>Ascomycota</taxon>
        <taxon>Saccharomycotina</taxon>
        <taxon>Saccharomycetes</taxon>
        <taxon>Saccharomycetales</taxon>
        <taxon>Saccharomycetaceae</taxon>
        <taxon>Saccharomyces</taxon>
    </lineage>
</organism>
<protein>
    <recommendedName>
        <fullName>Putative uncharacterized oxidoreductase YDR541C</fullName>
        <ecNumber>1.1.1.-</ecNumber>
    </recommendedName>
</protein>
<accession>Q03049</accession>
<accession>D6VTG0</accession>
<proteinExistence type="inferred from homology"/>
<dbReference type="EC" id="1.1.1.-"/>
<dbReference type="EMBL" id="U43834">
    <property type="protein sequence ID" value="AAB64983.1"/>
    <property type="molecule type" value="Genomic_DNA"/>
</dbReference>
<dbReference type="EMBL" id="AY692675">
    <property type="protein sequence ID" value="AAT92694.1"/>
    <property type="molecule type" value="Genomic_DNA"/>
</dbReference>
<dbReference type="EMBL" id="BK006938">
    <property type="protein sequence ID" value="DAA12370.2"/>
    <property type="molecule type" value="Genomic_DNA"/>
</dbReference>
<dbReference type="PIR" id="S62020">
    <property type="entry name" value="S62020"/>
</dbReference>
<dbReference type="RefSeq" id="NP_010830.4">
    <property type="nucleotide sequence ID" value="NM_001180849.4"/>
</dbReference>
<dbReference type="SMR" id="Q03049"/>
<dbReference type="BioGRID" id="32588">
    <property type="interactions" value="83"/>
</dbReference>
<dbReference type="DIP" id="DIP-5276N"/>
<dbReference type="FunCoup" id="Q03049">
    <property type="interactions" value="108"/>
</dbReference>
<dbReference type="IntAct" id="Q03049">
    <property type="interactions" value="4"/>
</dbReference>
<dbReference type="MINT" id="Q03049"/>
<dbReference type="STRING" id="4932.YDR541C"/>
<dbReference type="PaxDb" id="4932-YDR541C"/>
<dbReference type="PeptideAtlas" id="Q03049"/>
<dbReference type="EnsemblFungi" id="YDR541C_mRNA">
    <property type="protein sequence ID" value="YDR541C"/>
    <property type="gene ID" value="YDR541C"/>
</dbReference>
<dbReference type="GeneID" id="852154"/>
<dbReference type="KEGG" id="sce:YDR541C"/>
<dbReference type="AGR" id="SGD:S000002949"/>
<dbReference type="SGD" id="S000002949">
    <property type="gene designation" value="YDR541C"/>
</dbReference>
<dbReference type="VEuPathDB" id="FungiDB:YDR541C"/>
<dbReference type="eggNOG" id="KOG1502">
    <property type="taxonomic scope" value="Eukaryota"/>
</dbReference>
<dbReference type="GeneTree" id="ENSGT00940000176317"/>
<dbReference type="HOGENOM" id="CLU_007383_9_2_1"/>
<dbReference type="InParanoid" id="Q03049"/>
<dbReference type="OMA" id="AWYAMSK"/>
<dbReference type="OrthoDB" id="2735536at2759"/>
<dbReference type="BioCyc" id="YEAST:G3O-30049-MONOMER"/>
<dbReference type="BioGRID-ORCS" id="852154">
    <property type="hits" value="0 hits in 10 CRISPR screens"/>
</dbReference>
<dbReference type="PRO" id="PR:Q03049"/>
<dbReference type="Proteomes" id="UP000002311">
    <property type="component" value="Chromosome IV"/>
</dbReference>
<dbReference type="RNAct" id="Q03049">
    <property type="molecule type" value="protein"/>
</dbReference>
<dbReference type="GO" id="GO:0033721">
    <property type="term" value="F:aldehyde dehydrogenase (NADP+) activity"/>
    <property type="evidence" value="ECO:0000314"/>
    <property type="project" value="SGD"/>
</dbReference>
<dbReference type="GO" id="GO:0016616">
    <property type="term" value="F:oxidoreductase activity, acting on the CH-OH group of donors, NAD or NADP as acceptor"/>
    <property type="evidence" value="ECO:0000318"/>
    <property type="project" value="GO_Central"/>
</dbReference>
<dbReference type="GO" id="GO:1901426">
    <property type="term" value="P:response to furfural"/>
    <property type="evidence" value="ECO:0000315"/>
    <property type="project" value="SGD"/>
</dbReference>
<dbReference type="CDD" id="cd05227">
    <property type="entry name" value="AR_SDR_e"/>
    <property type="match status" value="1"/>
</dbReference>
<dbReference type="FunFam" id="3.40.50.720:FF:000191">
    <property type="entry name" value="Methylglyoxal reductase (NADPH-dependent)"/>
    <property type="match status" value="1"/>
</dbReference>
<dbReference type="Gene3D" id="3.40.50.720">
    <property type="entry name" value="NAD(P)-binding Rossmann-like Domain"/>
    <property type="match status" value="1"/>
</dbReference>
<dbReference type="InterPro" id="IPR001509">
    <property type="entry name" value="Epimerase_deHydtase"/>
</dbReference>
<dbReference type="InterPro" id="IPR036291">
    <property type="entry name" value="NAD(P)-bd_dom_sf"/>
</dbReference>
<dbReference type="InterPro" id="IPR050425">
    <property type="entry name" value="NAD(P)_dehydrat-like"/>
</dbReference>
<dbReference type="PANTHER" id="PTHR10366">
    <property type="entry name" value="NAD DEPENDENT EPIMERASE/DEHYDRATASE"/>
    <property type="match status" value="1"/>
</dbReference>
<dbReference type="PANTHER" id="PTHR10366:SF844">
    <property type="entry name" value="NADPH-DEPENDENT METHYLGLYOXAL REDUCTASE GRE2"/>
    <property type="match status" value="1"/>
</dbReference>
<dbReference type="Pfam" id="PF01370">
    <property type="entry name" value="Epimerase"/>
    <property type="match status" value="1"/>
</dbReference>
<dbReference type="SUPFAM" id="SSF51735">
    <property type="entry name" value="NAD(P)-binding Rossmann-fold domains"/>
    <property type="match status" value="1"/>
</dbReference>
<comment type="similarity">
    <text evidence="2">Belongs to the NAD(P)-dependent epimerase/dehydratase family. Dihydroflavonol-4-reductase subfamily.</text>
</comment>
<name>YD541_YEAST</name>
<reference key="1">
    <citation type="journal article" date="1997" name="Nature">
        <title>The nucleotide sequence of Saccharomyces cerevisiae chromosome IV.</title>
        <authorList>
            <person name="Jacq C."/>
            <person name="Alt-Moerbe J."/>
            <person name="Andre B."/>
            <person name="Arnold W."/>
            <person name="Bahr A."/>
            <person name="Ballesta J.P.G."/>
            <person name="Bargues M."/>
            <person name="Baron L."/>
            <person name="Becker A."/>
            <person name="Biteau N."/>
            <person name="Bloecker H."/>
            <person name="Blugeon C."/>
            <person name="Boskovic J."/>
            <person name="Brandt P."/>
            <person name="Brueckner M."/>
            <person name="Buitrago M.J."/>
            <person name="Coster F."/>
            <person name="Delaveau T."/>
            <person name="del Rey F."/>
            <person name="Dujon B."/>
            <person name="Eide L.G."/>
            <person name="Garcia-Cantalejo J.M."/>
            <person name="Goffeau A."/>
            <person name="Gomez-Peris A."/>
            <person name="Granotier C."/>
            <person name="Hanemann V."/>
            <person name="Hankeln T."/>
            <person name="Hoheisel J.D."/>
            <person name="Jaeger W."/>
            <person name="Jimenez A."/>
            <person name="Jonniaux J.-L."/>
            <person name="Kraemer C."/>
            <person name="Kuester H."/>
            <person name="Laamanen P."/>
            <person name="Legros Y."/>
            <person name="Louis E.J."/>
            <person name="Moeller-Rieker S."/>
            <person name="Monnet A."/>
            <person name="Moro M."/>
            <person name="Mueller-Auer S."/>
            <person name="Nussbaumer B."/>
            <person name="Paricio N."/>
            <person name="Paulin L."/>
            <person name="Perea J."/>
            <person name="Perez-Alonso M."/>
            <person name="Perez-Ortin J.E."/>
            <person name="Pohl T.M."/>
            <person name="Prydz H."/>
            <person name="Purnelle B."/>
            <person name="Rasmussen S.W."/>
            <person name="Remacha M.A."/>
            <person name="Revuelta J.L."/>
            <person name="Rieger M."/>
            <person name="Salom D."/>
            <person name="Saluz H.P."/>
            <person name="Saiz J.E."/>
            <person name="Saren A.-M."/>
            <person name="Schaefer M."/>
            <person name="Scharfe M."/>
            <person name="Schmidt E.R."/>
            <person name="Schneider C."/>
            <person name="Scholler P."/>
            <person name="Schwarz S."/>
            <person name="Soler-Mira A."/>
            <person name="Urrestarazu L.A."/>
            <person name="Verhasselt P."/>
            <person name="Vissers S."/>
            <person name="Voet M."/>
            <person name="Volckaert G."/>
            <person name="Wagner G."/>
            <person name="Wambutt R."/>
            <person name="Wedler E."/>
            <person name="Wedler H."/>
            <person name="Woelfl S."/>
            <person name="Harris D.E."/>
            <person name="Bowman S."/>
            <person name="Brown D."/>
            <person name="Churcher C.M."/>
            <person name="Connor R."/>
            <person name="Dedman K."/>
            <person name="Gentles S."/>
            <person name="Hamlin N."/>
            <person name="Hunt S."/>
            <person name="Jones L."/>
            <person name="McDonald S."/>
            <person name="Murphy L.D."/>
            <person name="Niblett D."/>
            <person name="Odell C."/>
            <person name="Oliver K."/>
            <person name="Rajandream M.A."/>
            <person name="Richards C."/>
            <person name="Shore L."/>
            <person name="Walsh S.V."/>
            <person name="Barrell B.G."/>
            <person name="Dietrich F.S."/>
            <person name="Mulligan J.T."/>
            <person name="Allen E."/>
            <person name="Araujo R."/>
            <person name="Aviles E."/>
            <person name="Berno A."/>
            <person name="Carpenter J."/>
            <person name="Chen E."/>
            <person name="Cherry J.M."/>
            <person name="Chung E."/>
            <person name="Duncan M."/>
            <person name="Hunicke-Smith S."/>
            <person name="Hyman R.W."/>
            <person name="Komp C."/>
            <person name="Lashkari D."/>
            <person name="Lew H."/>
            <person name="Lin D."/>
            <person name="Mosedale D."/>
            <person name="Nakahara K."/>
            <person name="Namath A."/>
            <person name="Oefner P."/>
            <person name="Oh C."/>
            <person name="Petel F.X."/>
            <person name="Roberts D."/>
            <person name="Schramm S."/>
            <person name="Schroeder M."/>
            <person name="Shogren T."/>
            <person name="Shroff N."/>
            <person name="Winant A."/>
            <person name="Yelton M.A."/>
            <person name="Botstein D."/>
            <person name="Davis R.W."/>
            <person name="Johnston M."/>
            <person name="Andrews S."/>
            <person name="Brinkman R."/>
            <person name="Cooper J."/>
            <person name="Ding H."/>
            <person name="Du Z."/>
            <person name="Favello A."/>
            <person name="Fulton L."/>
            <person name="Gattung S."/>
            <person name="Greco T."/>
            <person name="Hallsworth K."/>
            <person name="Hawkins J."/>
            <person name="Hillier L.W."/>
            <person name="Jier M."/>
            <person name="Johnson D."/>
            <person name="Johnston L."/>
            <person name="Kirsten J."/>
            <person name="Kucaba T."/>
            <person name="Langston Y."/>
            <person name="Latreille P."/>
            <person name="Le T."/>
            <person name="Mardis E."/>
            <person name="Menezes S."/>
            <person name="Miller N."/>
            <person name="Nhan M."/>
            <person name="Pauley A."/>
            <person name="Peluso D."/>
            <person name="Rifkin L."/>
            <person name="Riles L."/>
            <person name="Taich A."/>
            <person name="Trevaskis E."/>
            <person name="Vignati D."/>
            <person name="Wilcox L."/>
            <person name="Wohldman P."/>
            <person name="Vaudin M."/>
            <person name="Wilson R."/>
            <person name="Waterston R."/>
            <person name="Albermann K."/>
            <person name="Hani J."/>
            <person name="Heumann K."/>
            <person name="Kleine K."/>
            <person name="Mewes H.-W."/>
            <person name="Zollner A."/>
            <person name="Zaccaria P."/>
        </authorList>
    </citation>
    <scope>NUCLEOTIDE SEQUENCE [LARGE SCALE GENOMIC DNA]</scope>
    <source>
        <strain>ATCC 204508 / S288c</strain>
    </source>
</reference>
<reference key="2">
    <citation type="journal article" date="2014" name="G3 (Bethesda)">
        <title>The reference genome sequence of Saccharomyces cerevisiae: Then and now.</title>
        <authorList>
            <person name="Engel S.R."/>
            <person name="Dietrich F.S."/>
            <person name="Fisk D.G."/>
            <person name="Binkley G."/>
            <person name="Balakrishnan R."/>
            <person name="Costanzo M.C."/>
            <person name="Dwight S.S."/>
            <person name="Hitz B.C."/>
            <person name="Karra K."/>
            <person name="Nash R.S."/>
            <person name="Weng S."/>
            <person name="Wong E.D."/>
            <person name="Lloyd P."/>
            <person name="Skrzypek M.S."/>
            <person name="Miyasato S.R."/>
            <person name="Simison M."/>
            <person name="Cherry J.M."/>
        </authorList>
    </citation>
    <scope>GENOME REANNOTATION</scope>
    <scope>SEQUENCE REVISION TO 341</scope>
    <source>
        <strain>ATCC 204508 / S288c</strain>
    </source>
</reference>
<reference key="3">
    <citation type="journal article" date="2007" name="Genome Res.">
        <title>Approaching a complete repository of sequence-verified protein-encoding clones for Saccharomyces cerevisiae.</title>
        <authorList>
            <person name="Hu Y."/>
            <person name="Rolfs A."/>
            <person name="Bhullar B."/>
            <person name="Murthy T.V.S."/>
            <person name="Zhu C."/>
            <person name="Berger M.F."/>
            <person name="Camargo A.A."/>
            <person name="Kelley F."/>
            <person name="McCarron S."/>
            <person name="Jepson D."/>
            <person name="Richardson A."/>
            <person name="Raphael J."/>
            <person name="Moreira D."/>
            <person name="Taycher E."/>
            <person name="Zuo D."/>
            <person name="Mohr S."/>
            <person name="Kane M.F."/>
            <person name="Williamson J."/>
            <person name="Simpson A.J.G."/>
            <person name="Bulyk M.L."/>
            <person name="Harlow E."/>
            <person name="Marsischky G."/>
            <person name="Kolodner R.D."/>
            <person name="LaBaer J."/>
        </authorList>
    </citation>
    <scope>NUCLEOTIDE SEQUENCE [GENOMIC DNA]</scope>
    <source>
        <strain>ATCC 204508 / S288c</strain>
    </source>
</reference>